<keyword id="KW-1185">Reference proteome</keyword>
<keyword id="KW-0687">Ribonucleoprotein</keyword>
<keyword id="KW-0689">Ribosomal protein</keyword>
<keyword id="KW-0694">RNA-binding</keyword>
<keyword id="KW-0699">rRNA-binding</keyword>
<dbReference type="EMBL" id="AE002098">
    <property type="protein sequence ID" value="AAF40615.1"/>
    <property type="molecule type" value="Genomic_DNA"/>
</dbReference>
<dbReference type="PIR" id="G81232">
    <property type="entry name" value="G81232"/>
</dbReference>
<dbReference type="RefSeq" id="NP_273215.1">
    <property type="nucleotide sequence ID" value="NC_003112.2"/>
</dbReference>
<dbReference type="RefSeq" id="WP_002224773.1">
    <property type="nucleotide sequence ID" value="NC_003112.2"/>
</dbReference>
<dbReference type="SMR" id="Q9K1I3"/>
<dbReference type="FunCoup" id="Q9K1I3">
    <property type="interactions" value="621"/>
</dbReference>
<dbReference type="STRING" id="122586.NMB0157"/>
<dbReference type="PaxDb" id="122586-NMB0157"/>
<dbReference type="KEGG" id="nme:NMB0157"/>
<dbReference type="PATRIC" id="fig|122586.8.peg.198"/>
<dbReference type="HOGENOM" id="CLU_065464_1_2_4"/>
<dbReference type="InParanoid" id="Q9K1I3"/>
<dbReference type="OrthoDB" id="9805007at2"/>
<dbReference type="Proteomes" id="UP000000425">
    <property type="component" value="Chromosome"/>
</dbReference>
<dbReference type="GO" id="GO:0022625">
    <property type="term" value="C:cytosolic large ribosomal subunit"/>
    <property type="evidence" value="ECO:0000318"/>
    <property type="project" value="GO_Central"/>
</dbReference>
<dbReference type="GO" id="GO:0019843">
    <property type="term" value="F:rRNA binding"/>
    <property type="evidence" value="ECO:0007669"/>
    <property type="project" value="UniProtKB-UniRule"/>
</dbReference>
<dbReference type="GO" id="GO:0003735">
    <property type="term" value="F:structural constituent of ribosome"/>
    <property type="evidence" value="ECO:0000318"/>
    <property type="project" value="GO_Central"/>
</dbReference>
<dbReference type="GO" id="GO:0002181">
    <property type="term" value="P:cytoplasmic translation"/>
    <property type="evidence" value="ECO:0000318"/>
    <property type="project" value="GO_Central"/>
</dbReference>
<dbReference type="FunFam" id="3.90.930.12:FF:000001">
    <property type="entry name" value="50S ribosomal protein L6"/>
    <property type="match status" value="1"/>
</dbReference>
<dbReference type="FunFam" id="3.90.930.12:FF:000002">
    <property type="entry name" value="50S ribosomal protein L6"/>
    <property type="match status" value="1"/>
</dbReference>
<dbReference type="Gene3D" id="3.90.930.12">
    <property type="entry name" value="Ribosomal protein L6, alpha-beta domain"/>
    <property type="match status" value="2"/>
</dbReference>
<dbReference type="HAMAP" id="MF_01365_B">
    <property type="entry name" value="Ribosomal_uL6_B"/>
    <property type="match status" value="1"/>
</dbReference>
<dbReference type="InterPro" id="IPR000702">
    <property type="entry name" value="Ribosomal_uL6-like"/>
</dbReference>
<dbReference type="InterPro" id="IPR036789">
    <property type="entry name" value="Ribosomal_uL6-like_a/b-dom_sf"/>
</dbReference>
<dbReference type="InterPro" id="IPR020040">
    <property type="entry name" value="Ribosomal_uL6_a/b-dom"/>
</dbReference>
<dbReference type="InterPro" id="IPR019906">
    <property type="entry name" value="Ribosomal_uL6_bac-type"/>
</dbReference>
<dbReference type="InterPro" id="IPR002358">
    <property type="entry name" value="Ribosomal_uL6_CS"/>
</dbReference>
<dbReference type="NCBIfam" id="TIGR03654">
    <property type="entry name" value="L6_bact"/>
    <property type="match status" value="1"/>
</dbReference>
<dbReference type="PANTHER" id="PTHR11655">
    <property type="entry name" value="60S/50S RIBOSOMAL PROTEIN L6/L9"/>
    <property type="match status" value="1"/>
</dbReference>
<dbReference type="PANTHER" id="PTHR11655:SF14">
    <property type="entry name" value="LARGE RIBOSOMAL SUBUNIT PROTEIN UL6M"/>
    <property type="match status" value="1"/>
</dbReference>
<dbReference type="Pfam" id="PF00347">
    <property type="entry name" value="Ribosomal_L6"/>
    <property type="match status" value="2"/>
</dbReference>
<dbReference type="PIRSF" id="PIRSF002162">
    <property type="entry name" value="Ribosomal_L6"/>
    <property type="match status" value="1"/>
</dbReference>
<dbReference type="PRINTS" id="PR00059">
    <property type="entry name" value="RIBOSOMALL6"/>
</dbReference>
<dbReference type="SUPFAM" id="SSF56053">
    <property type="entry name" value="Ribosomal protein L6"/>
    <property type="match status" value="2"/>
</dbReference>
<dbReference type="PROSITE" id="PS00525">
    <property type="entry name" value="RIBOSOMAL_L6_1"/>
    <property type="match status" value="1"/>
</dbReference>
<protein>
    <recommendedName>
        <fullName evidence="1">Large ribosomal subunit protein uL6</fullName>
    </recommendedName>
    <alternativeName>
        <fullName evidence="2">50S ribosomal protein L6</fullName>
    </alternativeName>
</protein>
<evidence type="ECO:0000255" key="1">
    <source>
        <dbReference type="HAMAP-Rule" id="MF_01365"/>
    </source>
</evidence>
<evidence type="ECO:0000305" key="2"/>
<organism>
    <name type="scientific">Neisseria meningitidis serogroup B (strain ATCC BAA-335 / MC58)</name>
    <dbReference type="NCBI Taxonomy" id="122586"/>
    <lineage>
        <taxon>Bacteria</taxon>
        <taxon>Pseudomonadati</taxon>
        <taxon>Pseudomonadota</taxon>
        <taxon>Betaproteobacteria</taxon>
        <taxon>Neisseriales</taxon>
        <taxon>Neisseriaceae</taxon>
        <taxon>Neisseria</taxon>
    </lineage>
</organism>
<sequence length="177" mass="18904">MSRVAKNPVTVPAGVEVKFGAEALVIKGKNGELSFPLHSDVAIEFNDGKLTFVANNSSKQANAMSGTARALVSNMVKGVSEGFEKRLQLIGVGYRAQAQGKILNLSLGFSHPIVYEMPEGVSVQTPSQTEIVLTGSDKQVVGQVAAEIRAFRAPEPYKGKGVRYVGEVVVMKEAKKK</sequence>
<reference key="1">
    <citation type="journal article" date="2000" name="Science">
        <title>Complete genome sequence of Neisseria meningitidis serogroup B strain MC58.</title>
        <authorList>
            <person name="Tettelin H."/>
            <person name="Saunders N.J."/>
            <person name="Heidelberg J.F."/>
            <person name="Jeffries A.C."/>
            <person name="Nelson K.E."/>
            <person name="Eisen J.A."/>
            <person name="Ketchum K.A."/>
            <person name="Hood D.W."/>
            <person name="Peden J.F."/>
            <person name="Dodson R.J."/>
            <person name="Nelson W.C."/>
            <person name="Gwinn M.L."/>
            <person name="DeBoy R.T."/>
            <person name="Peterson J.D."/>
            <person name="Hickey E.K."/>
            <person name="Haft D.H."/>
            <person name="Salzberg S.L."/>
            <person name="White O."/>
            <person name="Fleischmann R.D."/>
            <person name="Dougherty B.A."/>
            <person name="Mason T.M."/>
            <person name="Ciecko A."/>
            <person name="Parksey D.S."/>
            <person name="Blair E."/>
            <person name="Cittone H."/>
            <person name="Clark E.B."/>
            <person name="Cotton M.D."/>
            <person name="Utterback T.R."/>
            <person name="Khouri H.M."/>
            <person name="Qin H."/>
            <person name="Vamathevan J.J."/>
            <person name="Gill J."/>
            <person name="Scarlato V."/>
            <person name="Masignani V."/>
            <person name="Pizza M."/>
            <person name="Grandi G."/>
            <person name="Sun L."/>
            <person name="Smith H.O."/>
            <person name="Fraser C.M."/>
            <person name="Moxon E.R."/>
            <person name="Rappuoli R."/>
            <person name="Venter J.C."/>
        </authorList>
    </citation>
    <scope>NUCLEOTIDE SEQUENCE [LARGE SCALE GENOMIC DNA]</scope>
    <source>
        <strain>ATCC BAA-335 / MC58</strain>
    </source>
</reference>
<reference key="2">
    <citation type="journal article" date="2005" name="Hum. Vaccin.">
        <title>Characterization of the protein content of a meningococcal outer membrane vesicle vaccine by polyacrylamide gel electrophoresis and mass spectrometry.</title>
        <authorList>
            <person name="Vipond C."/>
            <person name="Wheeler J.X."/>
            <person name="Jones C."/>
            <person name="Feavers I.M."/>
            <person name="Suker J."/>
        </authorList>
    </citation>
    <scope>IDENTIFICATION BY MASS SPECTROMETRY [LARGE SCALE ANALYSIS]</scope>
</reference>
<name>RL6_NEIMB</name>
<accession>Q9K1I3</accession>
<proteinExistence type="evidence at protein level"/>
<comment type="function">
    <text evidence="1">This protein binds to the 23S rRNA, and is important in its secondary structure. It is located near the subunit interface in the base of the L7/L12 stalk, and near the tRNA binding site of the peptidyltransferase center.</text>
</comment>
<comment type="subunit">
    <text evidence="1">Part of the 50S ribosomal subunit.</text>
</comment>
<comment type="miscellaneous">
    <text>Present in outer membrane vesicle formulations which are used as vaccines in human.</text>
</comment>
<comment type="similarity">
    <text evidence="1">Belongs to the universal ribosomal protein uL6 family.</text>
</comment>
<gene>
    <name evidence="1" type="primary">rplF</name>
    <name type="ordered locus">NMB0157</name>
</gene>
<feature type="chain" id="PRO_0000260901" description="Large ribosomal subunit protein uL6">
    <location>
        <begin position="1"/>
        <end position="177"/>
    </location>
</feature>